<reference key="1">
    <citation type="journal article" date="2009" name="Genome Res.">
        <title>Genome structure of a Saccharomyces cerevisiae strain widely used in bioethanol production.</title>
        <authorList>
            <person name="Argueso J.L."/>
            <person name="Carazzolle M.F."/>
            <person name="Mieczkowski P.A."/>
            <person name="Duarte F.M."/>
            <person name="Netto O.V.C."/>
            <person name="Missawa S.K."/>
            <person name="Galzerani F."/>
            <person name="Costa G.G.L."/>
            <person name="Vidal R.O."/>
            <person name="Noronha M.F."/>
            <person name="Dominska M."/>
            <person name="Andrietta M.G.S."/>
            <person name="Andrietta S.R."/>
            <person name="Cunha A.F."/>
            <person name="Gomes L.H."/>
            <person name="Tavares F.C.A."/>
            <person name="Alcarde A.R."/>
            <person name="Dietrich F.S."/>
            <person name="McCusker J.H."/>
            <person name="Petes T.D."/>
            <person name="Pereira G.A.G."/>
        </authorList>
    </citation>
    <scope>NUCLEOTIDE SEQUENCE [LARGE SCALE GENOMIC DNA]</scope>
    <source>
        <strain>JAY291</strain>
    </source>
</reference>
<accession>C7GUH8</accession>
<dbReference type="EC" id="3.1.-.-"/>
<dbReference type="EMBL" id="ACFL01000310">
    <property type="protein sequence ID" value="EEU05541.1"/>
    <property type="molecule type" value="Genomic_DNA"/>
</dbReference>
<dbReference type="Proteomes" id="UP000008073">
    <property type="component" value="Unassembled WGS sequence"/>
</dbReference>
<dbReference type="GO" id="GO:0005739">
    <property type="term" value="C:mitochondrion"/>
    <property type="evidence" value="ECO:0007669"/>
    <property type="project" value="UniProtKB-SubCell"/>
</dbReference>
<dbReference type="GO" id="GO:0005634">
    <property type="term" value="C:nucleus"/>
    <property type="evidence" value="ECO:0007669"/>
    <property type="project" value="TreeGrafter"/>
</dbReference>
<dbReference type="GO" id="GO:0051539">
    <property type="term" value="F:4 iron, 4 sulfur cluster binding"/>
    <property type="evidence" value="ECO:0007669"/>
    <property type="project" value="UniProtKB-KW"/>
</dbReference>
<dbReference type="GO" id="GO:0003677">
    <property type="term" value="F:DNA binding"/>
    <property type="evidence" value="ECO:0007669"/>
    <property type="project" value="UniProtKB-KW"/>
</dbReference>
<dbReference type="GO" id="GO:0046872">
    <property type="term" value="F:metal ion binding"/>
    <property type="evidence" value="ECO:0007669"/>
    <property type="project" value="UniProtKB-KW"/>
</dbReference>
<dbReference type="GO" id="GO:0045145">
    <property type="term" value="F:single-stranded DNA 5'-3' DNA exonuclease activity"/>
    <property type="evidence" value="ECO:0007669"/>
    <property type="project" value="InterPro"/>
</dbReference>
<dbReference type="GO" id="GO:0036297">
    <property type="term" value="P:interstrand cross-link repair"/>
    <property type="evidence" value="ECO:0007669"/>
    <property type="project" value="TreeGrafter"/>
</dbReference>
<dbReference type="GO" id="GO:0000002">
    <property type="term" value="P:mitochondrial genome maintenance"/>
    <property type="evidence" value="ECO:0007669"/>
    <property type="project" value="InterPro"/>
</dbReference>
<dbReference type="InterPro" id="IPR016610">
    <property type="entry name" value="Exo5"/>
</dbReference>
<dbReference type="InterPro" id="IPR019190">
    <property type="entry name" value="EXOV"/>
</dbReference>
<dbReference type="PANTHER" id="PTHR14464">
    <property type="entry name" value="EXONUCLEASE V"/>
    <property type="match status" value="1"/>
</dbReference>
<dbReference type="PANTHER" id="PTHR14464:SF4">
    <property type="entry name" value="EXONUCLEASE V"/>
    <property type="match status" value="1"/>
</dbReference>
<dbReference type="Pfam" id="PF09810">
    <property type="entry name" value="Exo5"/>
    <property type="match status" value="1"/>
</dbReference>
<dbReference type="PIRSF" id="PIRSF013220">
    <property type="entry name" value="UCP013220"/>
    <property type="match status" value="1"/>
</dbReference>
<sequence>MLGRTLINKHGFLIHPRRFVHLNDKSLDGTFILPSKKNHMYDVPTNDPSGILNASDIDRINNLPFFDNTSPTKETNTKEGALLSEKLASVKELFGEDPENPSFINYRFPRGLENPYFDIQVNQLKKKRLSVTQLCTTQNWCELRNFYDFYSQNLSNQLLNLKFQVQKGKKIHKSLEDETHPELNQYKSFTHNFLALTKLSMDIDNDMDALLDNWFNSINRLVSLFTKGDGHAREIVCHGFINLEDGKLVEHLLNSDSKTKENVIISGVIDHLTLRNKHNHQVQKGAAHLDTEYQSWGNILTNLLSNLKELKSNNEIVISDIKTRSVPKIPSIESVIESSKLQTMYYKFFFSHLSQDMTQTYHSFLINAKRRGLDVDAPINPTKILTFILTNPLFANDVKNLLYGLPINHSAFDNDAKGSNTFDMAAFNDLLDRGPTSFNVPIEQDEDSSESTKCVSLRDYGHFYTKWKTPLTLKYFAARLSQIYFIVGNLVSNDLMIEYYYHNDNFHNIIFPYDTLKLGTHAHDSAMVWFGGRDMHPIEPTQKNFNTYCKFCDYRHVCSWKNKNELKLIDLGKELKKIILESSMK</sequence>
<evidence type="ECO:0000250" key="1"/>
<evidence type="ECO:0000255" key="2"/>
<evidence type="ECO:0000305" key="3"/>
<protein>
    <recommendedName>
        <fullName>Exonuclease V, mitochondrial</fullName>
        <shortName>Exo V</shortName>
        <ecNumber>3.1.-.-</ecNumber>
    </recommendedName>
    <alternativeName>
        <fullName>Defects in morphology protein 1</fullName>
    </alternativeName>
</protein>
<proteinExistence type="inferred from homology"/>
<organism>
    <name type="scientific">Saccharomyces cerevisiae (strain JAY291)</name>
    <name type="common">Baker's yeast</name>
    <dbReference type="NCBI Taxonomy" id="574961"/>
    <lineage>
        <taxon>Eukaryota</taxon>
        <taxon>Fungi</taxon>
        <taxon>Dikarya</taxon>
        <taxon>Ascomycota</taxon>
        <taxon>Saccharomycotina</taxon>
        <taxon>Saccharomycetes</taxon>
        <taxon>Saccharomycetales</taxon>
        <taxon>Saccharomycetaceae</taxon>
        <taxon>Saccharomyces</taxon>
    </lineage>
</organism>
<keyword id="KW-0004">4Fe-4S</keyword>
<keyword id="KW-0238">DNA-binding</keyword>
<keyword id="KW-0269">Exonuclease</keyword>
<keyword id="KW-0378">Hydrolase</keyword>
<keyword id="KW-0408">Iron</keyword>
<keyword id="KW-0411">Iron-sulfur</keyword>
<keyword id="KW-0460">Magnesium</keyword>
<keyword id="KW-0479">Metal-binding</keyword>
<keyword id="KW-0496">Mitochondrion</keyword>
<keyword id="KW-0540">Nuclease</keyword>
<keyword id="KW-0809">Transit peptide</keyword>
<comment type="function">
    <text evidence="1">Single strand DNA specific 5' exonuclease involved in mitochondrial DNA replication and recombination. Releases dinucleotides as main products of catalysis. Has the capacity to slide across 5'double-stranded DNA or 5'RNA sequences and resumes cutting two nucleotides downstream of the double-stranded-to-single-stranded junction or RNA-to-DNA junction, respectively (By similarity).</text>
</comment>
<comment type="cofactor">
    <cofactor evidence="1">
        <name>Mg(2+)</name>
        <dbReference type="ChEBI" id="CHEBI:18420"/>
    </cofactor>
</comment>
<comment type="cofactor">
    <cofactor evidence="1">
        <name>[4Fe-4S] cluster</name>
        <dbReference type="ChEBI" id="CHEBI:49883"/>
    </cofactor>
    <text evidence="1">Binds 1 [4Fe-4S] cluster.</text>
</comment>
<comment type="subunit">
    <text evidence="1">Monomer.</text>
</comment>
<comment type="subcellular location">
    <subcellularLocation>
        <location evidence="1">Mitochondrion</location>
    </subcellularLocation>
</comment>
<comment type="similarity">
    <text evidence="3">Belongs to the EXO5 family.</text>
</comment>
<feature type="transit peptide" description="Mitochondrion" evidence="2">
    <location>
        <begin position="1"/>
        <end position="26"/>
    </location>
</feature>
<feature type="chain" id="PRO_0000406692" description="Exonuclease V, mitochondrial">
    <location>
        <begin position="27"/>
        <end position="585"/>
    </location>
</feature>
<feature type="binding site" evidence="1">
    <location>
        <position position="141"/>
    </location>
    <ligand>
        <name>[4Fe-4S] cluster</name>
        <dbReference type="ChEBI" id="CHEBI:49883"/>
    </ligand>
</feature>
<feature type="binding site" evidence="1">
    <location>
        <position position="549"/>
    </location>
    <ligand>
        <name>[4Fe-4S] cluster</name>
        <dbReference type="ChEBI" id="CHEBI:49883"/>
    </ligand>
</feature>
<feature type="binding site" evidence="1">
    <location>
        <position position="552"/>
    </location>
    <ligand>
        <name>[4Fe-4S] cluster</name>
        <dbReference type="ChEBI" id="CHEBI:49883"/>
    </ligand>
</feature>
<feature type="binding site" evidence="1">
    <location>
        <position position="558"/>
    </location>
    <ligand>
        <name>[4Fe-4S] cluster</name>
        <dbReference type="ChEBI" id="CHEBI:49883"/>
    </ligand>
</feature>
<name>EXO5_YEAS2</name>
<gene>
    <name type="primary">EXO5</name>
    <name type="synonym">DEM1</name>
    <name type="ORF">C1Q_04105</name>
</gene>